<dbReference type="EC" id="3.5.1.44" evidence="1"/>
<dbReference type="EMBL" id="CP000742">
    <property type="protein sequence ID" value="ABR54131.1"/>
    <property type="molecule type" value="Genomic_DNA"/>
</dbReference>
<dbReference type="RefSeq" id="WP_011972034.1">
    <property type="nucleotide sequence ID" value="NC_009634.1"/>
</dbReference>
<dbReference type="SMR" id="A6UNQ9"/>
<dbReference type="STRING" id="406327.Mevan_0221"/>
<dbReference type="GeneID" id="5324995"/>
<dbReference type="KEGG" id="mvn:Mevan_0221"/>
<dbReference type="eggNOG" id="arCOG02380">
    <property type="taxonomic scope" value="Archaea"/>
</dbReference>
<dbReference type="HOGENOM" id="CLU_087854_2_0_2"/>
<dbReference type="OrthoDB" id="10499at2157"/>
<dbReference type="Proteomes" id="UP000001107">
    <property type="component" value="Chromosome"/>
</dbReference>
<dbReference type="GO" id="GO:0050568">
    <property type="term" value="F:protein-glutamine glutaminase activity"/>
    <property type="evidence" value="ECO:0007669"/>
    <property type="project" value="UniProtKB-UniRule"/>
</dbReference>
<dbReference type="GO" id="GO:0006935">
    <property type="term" value="P:chemotaxis"/>
    <property type="evidence" value="ECO:0007669"/>
    <property type="project" value="UniProtKB-UniRule"/>
</dbReference>
<dbReference type="CDD" id="cd16352">
    <property type="entry name" value="CheD"/>
    <property type="match status" value="1"/>
</dbReference>
<dbReference type="Gene3D" id="3.30.1330.200">
    <property type="match status" value="1"/>
</dbReference>
<dbReference type="HAMAP" id="MF_01440">
    <property type="entry name" value="CheD"/>
    <property type="match status" value="1"/>
</dbReference>
<dbReference type="InterPro" id="IPR038592">
    <property type="entry name" value="CheD-like_sf"/>
</dbReference>
<dbReference type="InterPro" id="IPR005659">
    <property type="entry name" value="Chemorcpt_Glu_NH3ase_CheD"/>
</dbReference>
<dbReference type="InterPro" id="IPR011324">
    <property type="entry name" value="Cytotoxic_necrot_fac-like_cat"/>
</dbReference>
<dbReference type="PANTHER" id="PTHR35147">
    <property type="entry name" value="CHEMORECEPTOR GLUTAMINE DEAMIDASE CHED-RELATED"/>
    <property type="match status" value="1"/>
</dbReference>
<dbReference type="PANTHER" id="PTHR35147:SF1">
    <property type="entry name" value="CHEMORECEPTOR GLUTAMINE DEAMIDASE CHED-RELATED"/>
    <property type="match status" value="1"/>
</dbReference>
<dbReference type="Pfam" id="PF03975">
    <property type="entry name" value="CheD"/>
    <property type="match status" value="1"/>
</dbReference>
<dbReference type="SUPFAM" id="SSF64438">
    <property type="entry name" value="CNF1/YfiH-like putative cysteine hydrolases"/>
    <property type="match status" value="1"/>
</dbReference>
<comment type="function">
    <text evidence="1">Probably deamidates glutamine residues to glutamate on methyl-accepting chemotaxis receptors (MCPs), playing an important role in chemotaxis.</text>
</comment>
<comment type="catalytic activity">
    <reaction evidence="1">
        <text>L-glutaminyl-[protein] + H2O = L-glutamyl-[protein] + NH4(+)</text>
        <dbReference type="Rhea" id="RHEA:16441"/>
        <dbReference type="Rhea" id="RHEA-COMP:10207"/>
        <dbReference type="Rhea" id="RHEA-COMP:10208"/>
        <dbReference type="ChEBI" id="CHEBI:15377"/>
        <dbReference type="ChEBI" id="CHEBI:28938"/>
        <dbReference type="ChEBI" id="CHEBI:29973"/>
        <dbReference type="ChEBI" id="CHEBI:30011"/>
        <dbReference type="EC" id="3.5.1.44"/>
    </reaction>
</comment>
<comment type="similarity">
    <text evidence="1">Belongs to the CheD family.</text>
</comment>
<feature type="chain" id="PRO_1000068555" description="Probable chemoreceptor glutamine deamidase CheD">
    <location>
        <begin position="1"/>
        <end position="154"/>
    </location>
</feature>
<name>CHED_METVS</name>
<protein>
    <recommendedName>
        <fullName evidence="1">Probable chemoreceptor glutamine deamidase CheD</fullName>
        <ecNumber evidence="1">3.5.1.44</ecNumber>
    </recommendedName>
</protein>
<accession>A6UNQ9</accession>
<proteinExistence type="inferred from homology"/>
<keyword id="KW-0145">Chemotaxis</keyword>
<keyword id="KW-0378">Hydrolase</keyword>
<sequence length="154" mass="16319">MVLKVKMGDIGVGKSPDSIETLLGSCVAIILYDRGKKIGGLAHIMLPKSRESDSKSPGKYADTAVPELLERLVKLGARRDKLVAKIAGGAAMFKANTNSIDVGKKNIDASKDELKKVGLRVSSEDTGGESGRTVVLSLKDGNVTIRKGNEVKNI</sequence>
<organism>
    <name type="scientific">Methanococcus vannielii (strain ATCC 35089 / DSM 1224 / JCM 13029 / OCM 148 / SB)</name>
    <dbReference type="NCBI Taxonomy" id="406327"/>
    <lineage>
        <taxon>Archaea</taxon>
        <taxon>Methanobacteriati</taxon>
        <taxon>Methanobacteriota</taxon>
        <taxon>Methanomada group</taxon>
        <taxon>Methanococci</taxon>
        <taxon>Methanococcales</taxon>
        <taxon>Methanococcaceae</taxon>
        <taxon>Methanococcus</taxon>
    </lineage>
</organism>
<gene>
    <name evidence="1" type="primary">cheD</name>
    <name type="ordered locus">Mevan_0221</name>
</gene>
<reference key="1">
    <citation type="submission" date="2007-06" db="EMBL/GenBank/DDBJ databases">
        <title>Complete sequence of Methanococcus vannielii SB.</title>
        <authorList>
            <consortium name="US DOE Joint Genome Institute"/>
            <person name="Copeland A."/>
            <person name="Lucas S."/>
            <person name="Lapidus A."/>
            <person name="Barry K."/>
            <person name="Glavina del Rio T."/>
            <person name="Dalin E."/>
            <person name="Tice H."/>
            <person name="Pitluck S."/>
            <person name="Chain P."/>
            <person name="Malfatti S."/>
            <person name="Shin M."/>
            <person name="Vergez L."/>
            <person name="Schmutz J."/>
            <person name="Larimer F."/>
            <person name="Land M."/>
            <person name="Hauser L."/>
            <person name="Kyrpides N."/>
            <person name="Anderson I."/>
            <person name="Sieprawska-Lupa M."/>
            <person name="Whitman W.B."/>
            <person name="Richardson P."/>
        </authorList>
    </citation>
    <scope>NUCLEOTIDE SEQUENCE [LARGE SCALE GENOMIC DNA]</scope>
    <source>
        <strain>ATCC 35089 / DSM 1224 / JCM 13029 / OCM 148 / SB</strain>
    </source>
</reference>
<evidence type="ECO:0000255" key="1">
    <source>
        <dbReference type="HAMAP-Rule" id="MF_01440"/>
    </source>
</evidence>